<protein>
    <recommendedName>
        <fullName>TATA box-binding protein-associated factor RNA polymerase I subunit B</fullName>
    </recommendedName>
    <alternativeName>
        <fullName>RNA polymerase I-specific TBP-associated factor 63 kDa</fullName>
        <shortName>TAFI63</shortName>
    </alternativeName>
    <alternativeName>
        <fullName>TATA box-binding protein-associated factor 1B</fullName>
        <shortName>TBP-associated factor 1B</shortName>
    </alternativeName>
    <alternativeName>
        <fullName>Transcription initiation factor SL1/TIF-IB subunit B</fullName>
    </alternativeName>
</protein>
<comment type="function">
    <text evidence="1">Component of RNA polymerase I core factor complex that acts as a GTF2B/TFIIB-like factor and plays a key role in multiple steps during transcription initiation such as pre-initiation complex (PIC) assembly and postpolymerase recruitment events in polymerase I (Pol I) transcription. Binds rDNA promoters and plays a role in Pol I recruitment as a component of the SL1/TIF-IB complex and, possibly, directly through its interaction with RRN3 (By similarity).</text>
</comment>
<comment type="subunit">
    <text evidence="1 2">Interacts with FLNA (via N-terminus) (By similarity). Component of the transcription factor SL1/TIF-IB complex, composed of TBP and at least TAF1A, TAF1B, TAF1C and TAF1D. In the complex interacts directly with TBP, TAF1A and TAF1C. Interaction of the SL1/TIF-IB subunits with TBP excludes interaction of TBP with the transcription factor IID (TFIID) subunits. Interacts with TBP and RRN3 (By similarity). Part of Pol I pre-initiation complex (PIC), in which Pol I core assembles with RRN3 and promoter-bound UTBF and SL1/TIF-IB complex.</text>
</comment>
<comment type="subcellular location">
    <subcellularLocation>
        <location evidence="2">Nucleus</location>
        <location evidence="2">Nucleolus</location>
    </subcellularLocation>
</comment>
<comment type="domain">
    <text evidence="1">Although it shares weak sequence similarity with GTF2B/TFIIB, displays a similar subdomain organization as GTF2B/TFIIB, with a N-terminal zinc finger, a connecting region (composed of B-reader and B-linker regions), followed by 2 cyclin folds. The RRN7-type zinc finger plays an essential postrecruitment role in Pol I transcription at a step preceding synthesis of the first 40 nucleotides (By similarity).</text>
</comment>
<comment type="similarity">
    <text evidence="4">Belongs to the RRN7/TAF1B family.</text>
</comment>
<feature type="chain" id="PRO_0000416869" description="TATA box-binding protein-associated factor RNA polymerase I subunit B">
    <location>
        <begin position="1"/>
        <end position="586"/>
    </location>
</feature>
<feature type="zinc finger region" description="RRN7-type">
    <location>
        <begin position="5"/>
        <end position="39"/>
    </location>
</feature>
<feature type="region of interest" description="B-reader" evidence="1">
    <location>
        <begin position="40"/>
        <end position="68"/>
    </location>
</feature>
<feature type="region of interest" description="B-linker" evidence="1">
    <location>
        <begin position="69"/>
        <end position="73"/>
    </location>
</feature>
<feature type="region of interest" description="N-terminal cyclin fold" evidence="1">
    <location>
        <begin position="74"/>
        <end position="259"/>
    </location>
</feature>
<feature type="region of interest" description="Disordered" evidence="3">
    <location>
        <begin position="158"/>
        <end position="188"/>
    </location>
</feature>
<feature type="region of interest" description="C-terminal cyclin fold" evidence="1">
    <location>
        <begin position="260"/>
        <end position="370"/>
    </location>
</feature>
<feature type="compositionally biased region" description="Polar residues" evidence="3">
    <location>
        <begin position="158"/>
        <end position="171"/>
    </location>
</feature>
<feature type="binding site" evidence="1">
    <location>
        <position position="13"/>
    </location>
    <ligand>
        <name>Zn(2+)</name>
        <dbReference type="ChEBI" id="CHEBI:29105"/>
    </ligand>
</feature>
<feature type="binding site" evidence="1">
    <location>
        <position position="16"/>
    </location>
    <ligand>
        <name>Zn(2+)</name>
        <dbReference type="ChEBI" id="CHEBI:29105"/>
    </ligand>
</feature>
<feature type="binding site" evidence="1">
    <location>
        <position position="31"/>
    </location>
    <ligand>
        <name>Zn(2+)</name>
        <dbReference type="ChEBI" id="CHEBI:29105"/>
    </ligand>
</feature>
<feature type="binding site" evidence="1">
    <location>
        <position position="34"/>
    </location>
    <ligand>
        <name>Zn(2+)</name>
        <dbReference type="ChEBI" id="CHEBI:29105"/>
    </ligand>
</feature>
<feature type="modified residue" description="N-acetylmethionine" evidence="2">
    <location>
        <position position="1"/>
    </location>
</feature>
<feature type="modified residue" description="N6-acetyllysine" evidence="2">
    <location>
        <position position="438"/>
    </location>
</feature>
<gene>
    <name type="primary">Taf1b</name>
</gene>
<evidence type="ECO:0000250" key="1"/>
<evidence type="ECO:0000250" key="2">
    <source>
        <dbReference type="UniProtKB" id="Q53T94"/>
    </source>
</evidence>
<evidence type="ECO:0000256" key="3">
    <source>
        <dbReference type="SAM" id="MobiDB-lite"/>
    </source>
</evidence>
<evidence type="ECO:0000305" key="4"/>
<name>TAF1B_RAT</name>
<dbReference type="RefSeq" id="NP_001178036.1">
    <property type="nucleotide sequence ID" value="NM_001191107.1"/>
</dbReference>
<dbReference type="FunCoup" id="D3ZYB7">
    <property type="interactions" value="3195"/>
</dbReference>
<dbReference type="STRING" id="10116.ENSRNOP00000069237"/>
<dbReference type="PhosphoSitePlus" id="D3ZYB7"/>
<dbReference type="PaxDb" id="10116-ENSRNOP00000006187"/>
<dbReference type="Ensembl" id="ENSRNOT00000086798.2">
    <property type="protein sequence ID" value="ENSRNOP00000069237.1"/>
    <property type="gene ID" value="ENSRNOG00000061415.2"/>
</dbReference>
<dbReference type="GeneID" id="690450"/>
<dbReference type="KEGG" id="rno:690450"/>
<dbReference type="AGR" id="RGD:1596058"/>
<dbReference type="CTD" id="9014"/>
<dbReference type="RGD" id="1596058">
    <property type="gene designation" value="Taf1b"/>
</dbReference>
<dbReference type="eggNOG" id="ENOG502QVGU">
    <property type="taxonomic scope" value="Eukaryota"/>
</dbReference>
<dbReference type="GeneTree" id="ENSGT00440000033827"/>
<dbReference type="HOGENOM" id="CLU_032815_0_0_1"/>
<dbReference type="InParanoid" id="D3ZYB7"/>
<dbReference type="OrthoDB" id="10069252at2759"/>
<dbReference type="PhylomeDB" id="D3ZYB7"/>
<dbReference type="TreeFam" id="TF324353"/>
<dbReference type="Reactome" id="R-RNO-5250924">
    <property type="pathway name" value="B-WICH complex positively regulates rRNA expression"/>
</dbReference>
<dbReference type="Reactome" id="R-RNO-73762">
    <property type="pathway name" value="RNA Polymerase I Transcription Initiation"/>
</dbReference>
<dbReference type="Reactome" id="R-RNO-73772">
    <property type="pathway name" value="RNA Polymerase I Promoter Escape"/>
</dbReference>
<dbReference type="Reactome" id="R-RNO-73863">
    <property type="pathway name" value="RNA Polymerase I Transcription Termination"/>
</dbReference>
<dbReference type="PRO" id="PR:D3ZYB7"/>
<dbReference type="Proteomes" id="UP000002494">
    <property type="component" value="Chromosome 6"/>
</dbReference>
<dbReference type="Bgee" id="ENSRNOG00000061415">
    <property type="expression patterns" value="Expressed in thymus and 19 other cell types or tissues"/>
</dbReference>
<dbReference type="GO" id="GO:0070860">
    <property type="term" value="C:RNA polymerase I core factor complex"/>
    <property type="evidence" value="ECO:0000266"/>
    <property type="project" value="RGD"/>
</dbReference>
<dbReference type="GO" id="GO:0005668">
    <property type="term" value="C:RNA polymerase transcription factor SL1 complex"/>
    <property type="evidence" value="ECO:0000266"/>
    <property type="project" value="RGD"/>
</dbReference>
<dbReference type="GO" id="GO:0001164">
    <property type="term" value="F:RNA polymerase I core promoter sequence-specific DNA binding"/>
    <property type="evidence" value="ECO:0000250"/>
    <property type="project" value="UniProtKB"/>
</dbReference>
<dbReference type="GO" id="GO:0008270">
    <property type="term" value="F:zinc ion binding"/>
    <property type="evidence" value="ECO:0007669"/>
    <property type="project" value="UniProtKB-KW"/>
</dbReference>
<dbReference type="GO" id="GO:0042790">
    <property type="term" value="P:nucleolar large rRNA transcription by RNA polymerase I"/>
    <property type="evidence" value="ECO:0000318"/>
    <property type="project" value="GO_Central"/>
</dbReference>
<dbReference type="GO" id="GO:0001188">
    <property type="term" value="P:RNA polymerase I preinitiation complex assembly"/>
    <property type="evidence" value="ECO:0000250"/>
    <property type="project" value="UniProtKB"/>
</dbReference>
<dbReference type="InterPro" id="IPR048538">
    <property type="entry name" value="Rrn7_cyclin_C"/>
</dbReference>
<dbReference type="InterPro" id="IPR048540">
    <property type="entry name" value="Rrn7_cyclin_N"/>
</dbReference>
<dbReference type="InterPro" id="IPR033599">
    <property type="entry name" value="TAF1B/Rrn7"/>
</dbReference>
<dbReference type="InterPro" id="IPR021752">
    <property type="entry name" value="TF_Rrn7_Zf"/>
</dbReference>
<dbReference type="PANTHER" id="PTHR31576">
    <property type="entry name" value="TATA BOX-BINDING PROTEIN-ASSOCIATED FACTOR RNA POLYMERASE I SUBUNIT B"/>
    <property type="match status" value="1"/>
</dbReference>
<dbReference type="PANTHER" id="PTHR31576:SF2">
    <property type="entry name" value="TATA BOX-BINDING PROTEIN-ASSOCIATED FACTOR RNA POLYMERASE I SUBUNIT B"/>
    <property type="match status" value="1"/>
</dbReference>
<dbReference type="Pfam" id="PF20645">
    <property type="entry name" value="Rrn7_cyclin_C"/>
    <property type="match status" value="1"/>
</dbReference>
<dbReference type="Pfam" id="PF20644">
    <property type="entry name" value="Rrn7_cyclin_N"/>
    <property type="match status" value="1"/>
</dbReference>
<dbReference type="Pfam" id="PF11781">
    <property type="entry name" value="Zn_ribbon_RRN7"/>
    <property type="match status" value="1"/>
</dbReference>
<proteinExistence type="inferred from homology"/>
<keyword id="KW-0007">Acetylation</keyword>
<keyword id="KW-0238">DNA-binding</keyword>
<keyword id="KW-0479">Metal-binding</keyword>
<keyword id="KW-0539">Nucleus</keyword>
<keyword id="KW-1185">Reference proteome</keyword>
<keyword id="KW-0804">Transcription</keyword>
<keyword id="KW-0805">Transcription regulation</keyword>
<keyword id="KW-0862">Zinc</keyword>
<keyword id="KW-0863">Zinc-finger</keyword>
<organism>
    <name type="scientific">Rattus norvegicus</name>
    <name type="common">Rat</name>
    <dbReference type="NCBI Taxonomy" id="10116"/>
    <lineage>
        <taxon>Eukaryota</taxon>
        <taxon>Metazoa</taxon>
        <taxon>Chordata</taxon>
        <taxon>Craniata</taxon>
        <taxon>Vertebrata</taxon>
        <taxon>Euteleostomi</taxon>
        <taxon>Mammalia</taxon>
        <taxon>Eutheria</taxon>
        <taxon>Euarchontoglires</taxon>
        <taxon>Glires</taxon>
        <taxon>Rodentia</taxon>
        <taxon>Myomorpha</taxon>
        <taxon>Muroidea</taxon>
        <taxon>Muridae</taxon>
        <taxon>Murinae</taxon>
        <taxon>Rattus</taxon>
    </lineage>
</organism>
<sequence>MDVEQMKAFTDRCSQCAAVSWGLTDEGKYYCTSCHNVTDRSEEVVSTAVIPNTKINSISRGLRQRSKHEKGWDWYVCEGFQCILYHQAEALETLGVSPELKNEVLHSFWKRYLQKSKQAYCKNPVRTSGRKAKVLEDNLQSSDWGSDFELLSDTTCPPESGAEFQSDSQTPKPFPATKRSSKSASVCSGSVDGVEYSERKEKGLLKMTVPRTLALCYLSLLWQRETITLSDLLRFVEEDRIPYINAFKVFPEEMKVYGRDKGIFAVESWPDYEDIYKNMIEVAVFLDLPRFPDITEDCYLHPNTLCMKYLLEVNLPEEMYTLTCQVVKLTGIGEVDFLTFDPIAKMTRTVKHDVQAVAVIVLVLKLLFLLDDKLEWSYSDLAEAYNEGHKEETPQFDFRKWYQVMKKTFDEKRRKWEEARAKYVWKTKRPLYRSHIDKSVAYKRREMVENLQKQFSALIGSAPEVERQAPSSFQLNWTGEDTGSPCFHGHSLQGLLISKGQALITKNSLYWLSTHKFCKSYCKHVTTYEESNFSLSYQFILNIFSFLLRIKTSALHEEVSLLEKKLFEKKYNESKRSSRSKKVRRH</sequence>
<accession>D3ZYB7</accession>
<reference key="1">
    <citation type="journal article" date="2004" name="Nature">
        <title>Genome sequence of the Brown Norway rat yields insights into mammalian evolution.</title>
        <authorList>
            <person name="Gibbs R.A."/>
            <person name="Weinstock G.M."/>
            <person name="Metzker M.L."/>
            <person name="Muzny D.M."/>
            <person name="Sodergren E.J."/>
            <person name="Scherer S."/>
            <person name="Scott G."/>
            <person name="Steffen D."/>
            <person name="Worley K.C."/>
            <person name="Burch P.E."/>
            <person name="Okwuonu G."/>
            <person name="Hines S."/>
            <person name="Lewis L."/>
            <person name="Deramo C."/>
            <person name="Delgado O."/>
            <person name="Dugan-Rocha S."/>
            <person name="Miner G."/>
            <person name="Morgan M."/>
            <person name="Hawes A."/>
            <person name="Gill R."/>
            <person name="Holt R.A."/>
            <person name="Adams M.D."/>
            <person name="Amanatides P.G."/>
            <person name="Baden-Tillson H."/>
            <person name="Barnstead M."/>
            <person name="Chin S."/>
            <person name="Evans C.A."/>
            <person name="Ferriera S."/>
            <person name="Fosler C."/>
            <person name="Glodek A."/>
            <person name="Gu Z."/>
            <person name="Jennings D."/>
            <person name="Kraft C.L."/>
            <person name="Nguyen T."/>
            <person name="Pfannkoch C.M."/>
            <person name="Sitter C."/>
            <person name="Sutton G.G."/>
            <person name="Venter J.C."/>
            <person name="Woodage T."/>
            <person name="Smith D."/>
            <person name="Lee H.-M."/>
            <person name="Gustafson E."/>
            <person name="Cahill P."/>
            <person name="Kana A."/>
            <person name="Doucette-Stamm L."/>
            <person name="Weinstock K."/>
            <person name="Fechtel K."/>
            <person name="Weiss R.B."/>
            <person name="Dunn D.M."/>
            <person name="Green E.D."/>
            <person name="Blakesley R.W."/>
            <person name="Bouffard G.G."/>
            <person name="De Jong P.J."/>
            <person name="Osoegawa K."/>
            <person name="Zhu B."/>
            <person name="Marra M."/>
            <person name="Schein J."/>
            <person name="Bosdet I."/>
            <person name="Fjell C."/>
            <person name="Jones S."/>
            <person name="Krzywinski M."/>
            <person name="Mathewson C."/>
            <person name="Siddiqui A."/>
            <person name="Wye N."/>
            <person name="McPherson J."/>
            <person name="Zhao S."/>
            <person name="Fraser C.M."/>
            <person name="Shetty J."/>
            <person name="Shatsman S."/>
            <person name="Geer K."/>
            <person name="Chen Y."/>
            <person name="Abramzon S."/>
            <person name="Nierman W.C."/>
            <person name="Havlak P.H."/>
            <person name="Chen R."/>
            <person name="Durbin K.J."/>
            <person name="Egan A."/>
            <person name="Ren Y."/>
            <person name="Song X.-Z."/>
            <person name="Li B."/>
            <person name="Liu Y."/>
            <person name="Qin X."/>
            <person name="Cawley S."/>
            <person name="Cooney A.J."/>
            <person name="D'Souza L.M."/>
            <person name="Martin K."/>
            <person name="Wu J.Q."/>
            <person name="Gonzalez-Garay M.L."/>
            <person name="Jackson A.R."/>
            <person name="Kalafus K.J."/>
            <person name="McLeod M.P."/>
            <person name="Milosavljevic A."/>
            <person name="Virk D."/>
            <person name="Volkov A."/>
            <person name="Wheeler D.A."/>
            <person name="Zhang Z."/>
            <person name="Bailey J.A."/>
            <person name="Eichler E.E."/>
            <person name="Tuzun E."/>
            <person name="Birney E."/>
            <person name="Mongin E."/>
            <person name="Ureta-Vidal A."/>
            <person name="Woodwark C."/>
            <person name="Zdobnov E."/>
            <person name="Bork P."/>
            <person name="Suyama M."/>
            <person name="Torrents D."/>
            <person name="Alexandersson M."/>
            <person name="Trask B.J."/>
            <person name="Young J.M."/>
            <person name="Huang H."/>
            <person name="Wang H."/>
            <person name="Xing H."/>
            <person name="Daniels S."/>
            <person name="Gietzen D."/>
            <person name="Schmidt J."/>
            <person name="Stevens K."/>
            <person name="Vitt U."/>
            <person name="Wingrove J."/>
            <person name="Camara F."/>
            <person name="Mar Alba M."/>
            <person name="Abril J.F."/>
            <person name="Guigo R."/>
            <person name="Smit A."/>
            <person name="Dubchak I."/>
            <person name="Rubin E.M."/>
            <person name="Couronne O."/>
            <person name="Poliakov A."/>
            <person name="Huebner N."/>
            <person name="Ganten D."/>
            <person name="Goesele C."/>
            <person name="Hummel O."/>
            <person name="Kreitler T."/>
            <person name="Lee Y.-A."/>
            <person name="Monti J."/>
            <person name="Schulz H."/>
            <person name="Zimdahl H."/>
            <person name="Himmelbauer H."/>
            <person name="Lehrach H."/>
            <person name="Jacob H.J."/>
            <person name="Bromberg S."/>
            <person name="Gullings-Handley J."/>
            <person name="Jensen-Seaman M.I."/>
            <person name="Kwitek A.E."/>
            <person name="Lazar J."/>
            <person name="Pasko D."/>
            <person name="Tonellato P.J."/>
            <person name="Twigger S."/>
            <person name="Ponting C.P."/>
            <person name="Duarte J.M."/>
            <person name="Rice S."/>
            <person name="Goodstadt L."/>
            <person name="Beatson S.A."/>
            <person name="Emes R.D."/>
            <person name="Winter E.E."/>
            <person name="Webber C."/>
            <person name="Brandt P."/>
            <person name="Nyakatura G."/>
            <person name="Adetobi M."/>
            <person name="Chiaromonte F."/>
            <person name="Elnitski L."/>
            <person name="Eswara P."/>
            <person name="Hardison R.C."/>
            <person name="Hou M."/>
            <person name="Kolbe D."/>
            <person name="Makova K."/>
            <person name="Miller W."/>
            <person name="Nekrutenko A."/>
            <person name="Riemer C."/>
            <person name="Schwartz S."/>
            <person name="Taylor J."/>
            <person name="Yang S."/>
            <person name="Zhang Y."/>
            <person name="Lindpaintner K."/>
            <person name="Andrews T.D."/>
            <person name="Caccamo M."/>
            <person name="Clamp M."/>
            <person name="Clarke L."/>
            <person name="Curwen V."/>
            <person name="Durbin R.M."/>
            <person name="Eyras E."/>
            <person name="Searle S.M."/>
            <person name="Cooper G.M."/>
            <person name="Batzoglou S."/>
            <person name="Brudno M."/>
            <person name="Sidow A."/>
            <person name="Stone E.A."/>
            <person name="Payseur B.A."/>
            <person name="Bourque G."/>
            <person name="Lopez-Otin C."/>
            <person name="Puente X.S."/>
            <person name="Chakrabarti K."/>
            <person name="Chatterji S."/>
            <person name="Dewey C."/>
            <person name="Pachter L."/>
            <person name="Bray N."/>
            <person name="Yap V.B."/>
            <person name="Caspi A."/>
            <person name="Tesler G."/>
            <person name="Pevzner P.A."/>
            <person name="Haussler D."/>
            <person name="Roskin K.M."/>
            <person name="Baertsch R."/>
            <person name="Clawson H."/>
            <person name="Furey T.S."/>
            <person name="Hinrichs A.S."/>
            <person name="Karolchik D."/>
            <person name="Kent W.J."/>
            <person name="Rosenbloom K.R."/>
            <person name="Trumbower H."/>
            <person name="Weirauch M."/>
            <person name="Cooper D.N."/>
            <person name="Stenson P.D."/>
            <person name="Ma B."/>
            <person name="Brent M."/>
            <person name="Arumugam M."/>
            <person name="Shteynberg D."/>
            <person name="Copley R.R."/>
            <person name="Taylor M.S."/>
            <person name="Riethman H."/>
            <person name="Mudunuri U."/>
            <person name="Peterson J."/>
            <person name="Guyer M."/>
            <person name="Felsenfeld A."/>
            <person name="Old S."/>
            <person name="Mockrin S."/>
            <person name="Collins F.S."/>
        </authorList>
    </citation>
    <scope>NUCLEOTIDE SEQUENCE [LARGE SCALE GENOMIC DNA]</scope>
    <source>
        <strain>Brown Norway</strain>
    </source>
</reference>